<keyword id="KW-0027">Amidation</keyword>
<keyword id="KW-0903">Direct protein sequencing</keyword>
<keyword id="KW-0527">Neuropeptide</keyword>
<keyword id="KW-0964">Secreted</keyword>
<organism>
    <name type="scientific">Symploce pallens</name>
    <name type="common">Smooth cockroach</name>
    <name type="synonym">Symploce capitata</name>
    <dbReference type="NCBI Taxonomy" id="36974"/>
    <lineage>
        <taxon>Eukaryota</taxon>
        <taxon>Metazoa</taxon>
        <taxon>Ecdysozoa</taxon>
        <taxon>Arthropoda</taxon>
        <taxon>Hexapoda</taxon>
        <taxon>Insecta</taxon>
        <taxon>Pterygota</taxon>
        <taxon>Neoptera</taxon>
        <taxon>Polyneoptera</taxon>
        <taxon>Dictyoptera</taxon>
        <taxon>Blattodea</taxon>
        <taxon>Blaberoidea</taxon>
        <taxon>Blattellidae</taxon>
        <taxon>Symploce</taxon>
    </lineage>
</organism>
<sequence length="17" mass="1725">EGGSSGEASGMWFGPRL</sequence>
<accession>P85784</accession>
<name>PPK5_SYMPA</name>
<proteinExistence type="evidence at protein level"/>
<evidence type="ECO:0000250" key="1">
    <source>
        <dbReference type="UniProtKB" id="P82617"/>
    </source>
</evidence>
<evidence type="ECO:0000255" key="2"/>
<evidence type="ECO:0000269" key="3">
    <source>
    </source>
</evidence>
<evidence type="ECO:0000303" key="4">
    <source>
    </source>
</evidence>
<evidence type="ECO:0000305" key="5"/>
<reference evidence="5" key="1">
    <citation type="journal article" date="2009" name="BMC Evol. Biol.">
        <title>A proteomic approach for studying insect phylogeny: CAPA peptides of ancient insect taxa (Dictyoptera, Blattoptera) as a test case.</title>
        <authorList>
            <person name="Roth S."/>
            <person name="Fromm B."/>
            <person name="Gaede G."/>
            <person name="Predel R."/>
        </authorList>
    </citation>
    <scope>PROTEIN SEQUENCE</scope>
    <scope>AMIDATION AT LEU-17</scope>
    <source>
        <tissue evidence="3">Abdominal perisympathetic organs</tissue>
    </source>
</reference>
<protein>
    <recommendedName>
        <fullName evidence="1">Pyrokinin-5</fullName>
    </recommendedName>
    <alternativeName>
        <fullName evidence="1">FXPRL-amide</fullName>
    </alternativeName>
    <alternativeName>
        <fullName evidence="4">SymPa-Capa-PK</fullName>
    </alternativeName>
</protein>
<feature type="peptide" id="PRO_0000378726" description="Pyrokinin-5" evidence="3">
    <location>
        <begin position="1"/>
        <end position="17"/>
    </location>
</feature>
<feature type="modified residue" description="Leucine amide" evidence="3">
    <location>
        <position position="17"/>
    </location>
</feature>
<dbReference type="GO" id="GO:0005576">
    <property type="term" value="C:extracellular region"/>
    <property type="evidence" value="ECO:0007669"/>
    <property type="project" value="UniProtKB-SubCell"/>
</dbReference>
<dbReference type="GO" id="GO:0005184">
    <property type="term" value="F:neuropeptide hormone activity"/>
    <property type="evidence" value="ECO:0007669"/>
    <property type="project" value="InterPro"/>
</dbReference>
<dbReference type="GO" id="GO:0007218">
    <property type="term" value="P:neuropeptide signaling pathway"/>
    <property type="evidence" value="ECO:0007669"/>
    <property type="project" value="UniProtKB-KW"/>
</dbReference>
<dbReference type="InterPro" id="IPR001484">
    <property type="entry name" value="Pyrokinin_CS"/>
</dbReference>
<dbReference type="PROSITE" id="PS00539">
    <property type="entry name" value="PYROKININ"/>
    <property type="match status" value="1"/>
</dbReference>
<comment type="function">
    <text evidence="1">Myoactive.</text>
</comment>
<comment type="subcellular location">
    <subcellularLocation>
        <location evidence="5">Secreted</location>
    </subcellularLocation>
</comment>
<comment type="similarity">
    <text evidence="2">Belongs to the pyrokinin family.</text>
</comment>